<sequence length="417" mass="45437">MGRRRGVELYRAPFPLYALRIDPKTGLLIAAGGGGAAKTGIKNGVHFLQLELINGCLSASLLHSHDTETRATMNLALAGDILAAGQDAQCQLLRFQVHQQKGSKAEKSGSKEQGPRQRKGAPPAEKKSGAQVHPEGVELKVKNLEAVQTDFSNEPLQKVVCFNHDNTLLATGGTDGHVRVWKVPSLEKVLEFKAHEGEIGDLTLGPDGKLVTVGWDFKASVWQKDQLVTQLQWQENGPASSNTPYRYQACRFGQVPDQLGGLRLFTVQIPHKRLRQPPPCYLTAWDSSTFLPLRTRSCGHEVISCLSVSDSGTFLGLGTVTGSVAIYIAFSLQRLYYVKEAHGIVVTDVTFLPEKGCGPKLLGPHETALFSVAVDSRCQLHLLPSRRSVPVWLLLLLCVGLIIVTILLLQTAFPGFL</sequence>
<evidence type="ECO:0000250" key="1">
    <source>
        <dbReference type="UniProtKB" id="Q9HCU5"/>
    </source>
</evidence>
<evidence type="ECO:0000250" key="2">
    <source>
        <dbReference type="UniProtKB" id="Q9WTV0"/>
    </source>
</evidence>
<evidence type="ECO:0000255" key="3"/>
<evidence type="ECO:0000256" key="4">
    <source>
        <dbReference type="SAM" id="MobiDB-lite"/>
    </source>
</evidence>
<evidence type="ECO:0000269" key="5">
    <source>
    </source>
</evidence>
<evidence type="ECO:0000269" key="6">
    <source>
    </source>
</evidence>
<evidence type="ECO:0000269" key="7">
    <source>
    </source>
</evidence>
<evidence type="ECO:0000303" key="8">
    <source>
    </source>
</evidence>
<evidence type="ECO:0000303" key="9">
    <source ref="1"/>
</evidence>
<evidence type="ECO:0000305" key="10"/>
<evidence type="ECO:0000305" key="11">
    <source>
    </source>
</evidence>
<evidence type="ECO:0000312" key="12">
    <source>
        <dbReference type="MGI" id="MGI:1355326"/>
    </source>
</evidence>
<evidence type="ECO:0007744" key="13">
    <source>
    </source>
</evidence>
<organism>
    <name type="scientific">Mus musculus</name>
    <name type="common">Mouse</name>
    <dbReference type="NCBI Taxonomy" id="10090"/>
    <lineage>
        <taxon>Eukaryota</taxon>
        <taxon>Metazoa</taxon>
        <taxon>Chordata</taxon>
        <taxon>Craniata</taxon>
        <taxon>Vertebrata</taxon>
        <taxon>Euteleostomi</taxon>
        <taxon>Mammalia</taxon>
        <taxon>Eutheria</taxon>
        <taxon>Euarchontoglires</taxon>
        <taxon>Glires</taxon>
        <taxon>Rodentia</taxon>
        <taxon>Myomorpha</taxon>
        <taxon>Muroidea</taxon>
        <taxon>Muridae</taxon>
        <taxon>Murinae</taxon>
        <taxon>Mus</taxon>
        <taxon>Mus</taxon>
    </lineage>
</organism>
<proteinExistence type="evidence at protein level"/>
<gene>
    <name evidence="9 12" type="primary">Preb</name>
    <name evidence="8" type="synonym">Sec12</name>
</gene>
<accession>Q9WUQ2</accession>
<accession>Q9QZ99</accession>
<comment type="function">
    <text evidence="1 6">Guanine nucleotide exchange factor (GEF) that regulates the assembly of the coat protein complex II/COPII in endoplasmic reticulum (ER) to Golgi vesicle-mediated transport. Selectively activates SAR1A and SAR1B by promoting the exchange of guanosine diphosphate (GDP) for guanosine triphosphate (GTP) in these small GTPases (PubMed:11422940). In their activated GTP-bound state, SAR1A and SAR1B insert into the membrane of the endoplasmic reticulum where they recruit the remainder of the coat protein complex II/COPII which is responsible for both the sorting of proteins and the deformation and budding of membranes into vesicles destined to the Golgi (By similarity).</text>
</comment>
<comment type="function">
    <text evidence="2">Was first identified based on its probable role in the regulation of pituitary gene transcription. Binds to the prolactin gene (PRL) promoter and seems to activate transcription.</text>
</comment>
<comment type="subunit">
    <text evidence="1 6 7">Interacts with SAR1B (GDP-bound form) (PubMed:11422940). Interacts with MIA2; recruits PREB to endoplasmic reticulum exit sites (By similarity). Interacts with CIDEB; facilitating loading of SCAP-SREBP into COPII vesicles (PubMed:30858281).</text>
</comment>
<comment type="subcellular location">
    <subcellularLocation>
        <location evidence="2">Endoplasmic reticulum membrane</location>
        <topology evidence="2">Single-pass membrane protein</topology>
    </subcellularLocation>
    <subcellularLocation>
        <location evidence="2">Nucleus</location>
    </subcellularLocation>
    <text evidence="1">Concentrates at endoplasmic reticulum exit sites (ERES), also known as transitional endoplasmic reticulum (tER).</text>
</comment>
<comment type="developmental stage">
    <text evidence="5">Detected starting at 10.5 dpc in the ectoderm and superficial mesoderm surrounding the caudal part of the tail region. At 12.5 dpc detected in dorsal root ganglia, surface ectoderm surrounding the caudal part of the tail, the inferior wall of the genital tubercle, developing liver, in Rathke pouch and in condensing mesenchyme forming the roof of the skull. At 14.5 dpc detected in the perichondrial region of the craniofacial, axial, and appendicular skeleton. By 16.5 dpc expression is much lower throughout the embryo, and is not detectable by 18.5 dpc.</text>
</comment>
<protein>
    <recommendedName>
        <fullName evidence="11">Guanine nucleotide-exchange factor SEC12</fullName>
    </recommendedName>
    <alternativeName>
        <fullName evidence="8">Mammalian guanine nucleotide exchange factor Sec12</fullName>
        <shortName evidence="8">mSec12</shortName>
    </alternativeName>
    <alternativeName>
        <fullName evidence="9">Prolactin regulatory element-binding protein</fullName>
    </alternativeName>
</protein>
<dbReference type="EMBL" id="AF150808">
    <property type="protein sequence ID" value="AAD31722.1"/>
    <property type="molecule type" value="mRNA"/>
</dbReference>
<dbReference type="EMBL" id="AF193017">
    <property type="protein sequence ID" value="AAF07954.1"/>
    <property type="molecule type" value="mRNA"/>
</dbReference>
<dbReference type="EMBL" id="BC017527">
    <property type="protein sequence ID" value="AAH17527.1"/>
    <property type="molecule type" value="mRNA"/>
</dbReference>
<dbReference type="CCDS" id="CCDS39051.1"/>
<dbReference type="RefSeq" id="NP_057912.2">
    <property type="nucleotide sequence ID" value="NM_016703.3"/>
</dbReference>
<dbReference type="SMR" id="Q9WUQ2"/>
<dbReference type="BioGRID" id="206147">
    <property type="interactions" value="12"/>
</dbReference>
<dbReference type="FunCoup" id="Q9WUQ2">
    <property type="interactions" value="3041"/>
</dbReference>
<dbReference type="IntAct" id="Q9WUQ2">
    <property type="interactions" value="3"/>
</dbReference>
<dbReference type="STRING" id="10090.ENSMUSP00000074387"/>
<dbReference type="GlyGen" id="Q9WUQ2">
    <property type="glycosylation" value="1 site, 1 O-linked glycan (1 site)"/>
</dbReference>
<dbReference type="iPTMnet" id="Q9WUQ2"/>
<dbReference type="PhosphoSitePlus" id="Q9WUQ2"/>
<dbReference type="SwissPalm" id="Q9WUQ2"/>
<dbReference type="jPOST" id="Q9WUQ2"/>
<dbReference type="PaxDb" id="10090-ENSMUSP00000074387"/>
<dbReference type="ProteomicsDB" id="289401"/>
<dbReference type="Pumba" id="Q9WUQ2"/>
<dbReference type="Antibodypedia" id="3012">
    <property type="antibodies" value="109 antibodies from 27 providers"/>
</dbReference>
<dbReference type="DNASU" id="50907"/>
<dbReference type="Ensembl" id="ENSMUST00000074840.12">
    <property type="protein sequence ID" value="ENSMUSP00000074387.6"/>
    <property type="gene ID" value="ENSMUSG00000045302.14"/>
</dbReference>
<dbReference type="GeneID" id="50907"/>
<dbReference type="KEGG" id="mmu:50907"/>
<dbReference type="UCSC" id="uc012dui.2">
    <property type="organism name" value="mouse"/>
</dbReference>
<dbReference type="AGR" id="MGI:1355326"/>
<dbReference type="CTD" id="10113"/>
<dbReference type="MGI" id="MGI:1355326">
    <property type="gene designation" value="Preb"/>
</dbReference>
<dbReference type="VEuPathDB" id="HostDB:ENSMUSG00000045302"/>
<dbReference type="eggNOG" id="KOG0771">
    <property type="taxonomic scope" value="Eukaryota"/>
</dbReference>
<dbReference type="GeneTree" id="ENSGT00390000018031"/>
<dbReference type="HOGENOM" id="CLU_054579_1_0_1"/>
<dbReference type="InParanoid" id="Q9WUQ2"/>
<dbReference type="OMA" id="YYVQPRI"/>
<dbReference type="OrthoDB" id="2013972at2759"/>
<dbReference type="PhylomeDB" id="Q9WUQ2"/>
<dbReference type="TreeFam" id="TF314383"/>
<dbReference type="Reactome" id="R-MMU-204005">
    <property type="pathway name" value="COPII-mediated vesicle transport"/>
</dbReference>
<dbReference type="Reactome" id="R-MMU-5694530">
    <property type="pathway name" value="Cargo concentration in the ER"/>
</dbReference>
<dbReference type="BioGRID-ORCS" id="50907">
    <property type="hits" value="23 hits in 82 CRISPR screens"/>
</dbReference>
<dbReference type="CD-CODE" id="CE726F99">
    <property type="entry name" value="Postsynaptic density"/>
</dbReference>
<dbReference type="ChiTaRS" id="Preb">
    <property type="organism name" value="mouse"/>
</dbReference>
<dbReference type="PRO" id="PR:Q9WUQ2"/>
<dbReference type="Proteomes" id="UP000000589">
    <property type="component" value="Chromosome 5"/>
</dbReference>
<dbReference type="RNAct" id="Q9WUQ2">
    <property type="molecule type" value="protein"/>
</dbReference>
<dbReference type="Bgee" id="ENSMUSG00000045302">
    <property type="expression patterns" value="Expressed in bone fossa and 272 other cell types or tissues"/>
</dbReference>
<dbReference type="ExpressionAtlas" id="Q9WUQ2">
    <property type="expression patterns" value="baseline and differential"/>
</dbReference>
<dbReference type="GO" id="GO:0070971">
    <property type="term" value="C:endoplasmic reticulum exit site"/>
    <property type="evidence" value="ECO:0000250"/>
    <property type="project" value="UniProtKB"/>
</dbReference>
<dbReference type="GO" id="GO:0005789">
    <property type="term" value="C:endoplasmic reticulum membrane"/>
    <property type="evidence" value="ECO:0000250"/>
    <property type="project" value="UniProtKB"/>
</dbReference>
<dbReference type="GO" id="GO:0005634">
    <property type="term" value="C:nucleus"/>
    <property type="evidence" value="ECO:0007669"/>
    <property type="project" value="UniProtKB-SubCell"/>
</dbReference>
<dbReference type="GO" id="GO:0003677">
    <property type="term" value="F:DNA binding"/>
    <property type="evidence" value="ECO:0007669"/>
    <property type="project" value="UniProtKB-KW"/>
</dbReference>
<dbReference type="GO" id="GO:0003700">
    <property type="term" value="F:DNA-binding transcription factor activity"/>
    <property type="evidence" value="ECO:0000250"/>
    <property type="project" value="MGI"/>
</dbReference>
<dbReference type="GO" id="GO:0051020">
    <property type="term" value="F:GTPase binding"/>
    <property type="evidence" value="ECO:0000353"/>
    <property type="project" value="UniProtKB"/>
</dbReference>
<dbReference type="GO" id="GO:0005085">
    <property type="term" value="F:guanyl-nucleotide exchange factor activity"/>
    <property type="evidence" value="ECO:0000314"/>
    <property type="project" value="UniProtKB"/>
</dbReference>
<dbReference type="GO" id="GO:0048208">
    <property type="term" value="P:COPII vesicle coating"/>
    <property type="evidence" value="ECO:0000250"/>
    <property type="project" value="UniProtKB"/>
</dbReference>
<dbReference type="GO" id="GO:0006888">
    <property type="term" value="P:endoplasmic reticulum to Golgi vesicle-mediated transport"/>
    <property type="evidence" value="ECO:0000250"/>
    <property type="project" value="UniProtKB"/>
</dbReference>
<dbReference type="GO" id="GO:0015031">
    <property type="term" value="P:protein transport"/>
    <property type="evidence" value="ECO:0007669"/>
    <property type="project" value="UniProtKB-KW"/>
</dbReference>
<dbReference type="GO" id="GO:0003400">
    <property type="term" value="P:regulation of COPII vesicle coating"/>
    <property type="evidence" value="ECO:0007669"/>
    <property type="project" value="Ensembl"/>
</dbReference>
<dbReference type="Gene3D" id="2.130.10.10">
    <property type="entry name" value="YVTN repeat-like/Quinoprotein amine dehydrogenase"/>
    <property type="match status" value="1"/>
</dbReference>
<dbReference type="InterPro" id="IPR011047">
    <property type="entry name" value="Quinoprotein_ADH-like_sf"/>
</dbReference>
<dbReference type="InterPro" id="IPR045260">
    <property type="entry name" value="Sec12-like"/>
</dbReference>
<dbReference type="InterPro" id="IPR015943">
    <property type="entry name" value="WD40/YVTN_repeat-like_dom_sf"/>
</dbReference>
<dbReference type="InterPro" id="IPR001680">
    <property type="entry name" value="WD40_rpt"/>
</dbReference>
<dbReference type="PANTHER" id="PTHR23284">
    <property type="entry name" value="PROLACTIN REGULATORY ELEMENT BINDING PROTEIN"/>
    <property type="match status" value="1"/>
</dbReference>
<dbReference type="PANTHER" id="PTHR23284:SF0">
    <property type="entry name" value="PROLACTIN REGULATORY ELEMENT-BINDING PROTEIN"/>
    <property type="match status" value="1"/>
</dbReference>
<dbReference type="Pfam" id="PF00400">
    <property type="entry name" value="WD40"/>
    <property type="match status" value="2"/>
</dbReference>
<dbReference type="SMART" id="SM00320">
    <property type="entry name" value="WD40"/>
    <property type="match status" value="3"/>
</dbReference>
<dbReference type="SUPFAM" id="SSF50998">
    <property type="entry name" value="Quinoprotein alcohol dehydrogenase-like"/>
    <property type="match status" value="1"/>
</dbReference>
<dbReference type="PROSITE" id="PS50082">
    <property type="entry name" value="WD_REPEATS_2"/>
    <property type="match status" value="1"/>
</dbReference>
<dbReference type="PROSITE" id="PS50294">
    <property type="entry name" value="WD_REPEATS_REGION"/>
    <property type="match status" value="1"/>
</dbReference>
<feature type="chain" id="PRO_0000051155" description="Guanine nucleotide-exchange factor SEC12">
    <location>
        <begin position="1"/>
        <end position="417"/>
    </location>
</feature>
<feature type="topological domain" description="Cytoplasmic" evidence="3">
    <location>
        <begin position="1"/>
        <end position="388"/>
    </location>
</feature>
<feature type="transmembrane region" description="Helical" evidence="3">
    <location>
        <begin position="389"/>
        <end position="409"/>
    </location>
</feature>
<feature type="topological domain" description="Lumenal" evidence="3">
    <location>
        <begin position="410"/>
        <end position="417"/>
    </location>
</feature>
<feature type="repeat" description="WD 1">
    <location>
        <begin position="152"/>
        <end position="191"/>
    </location>
</feature>
<feature type="repeat" description="WD 2">
    <location>
        <begin position="194"/>
        <end position="232"/>
    </location>
</feature>
<feature type="repeat" description="WD 3">
    <location>
        <begin position="298"/>
        <end position="337"/>
    </location>
</feature>
<feature type="region of interest" description="Disordered" evidence="4">
    <location>
        <begin position="101"/>
        <end position="135"/>
    </location>
</feature>
<feature type="compositionally biased region" description="Basic and acidic residues" evidence="4">
    <location>
        <begin position="103"/>
        <end position="115"/>
    </location>
</feature>
<feature type="modified residue" description="3'-nitrotyrosine" evidence="13">
    <location>
        <position position="10"/>
    </location>
</feature>
<feature type="sequence conflict" description="In Ref. 2; AAF07954." evidence="10" ref="2">
    <location>
        <position position="136"/>
    </location>
</feature>
<reference key="1">
    <citation type="submission" date="1999-05" db="EMBL/GenBank/DDBJ databases">
        <title>The human and mouse homologues of rat prolactin regulatory element binding protein.</title>
        <authorList>
            <person name="Edgar A.J."/>
            <person name="Polak J.M."/>
        </authorList>
    </citation>
    <scope>NUCLEOTIDE SEQUENCE [MRNA]</scope>
    <source>
        <tissue>Lung</tissue>
    </source>
</reference>
<reference key="2">
    <citation type="journal article" date="2000" name="Genomics">
        <title>Mapping and developmental expression analysis of the WD-repeat gene Preb.</title>
        <authorList>
            <person name="Taylor Clelland C.L."/>
            <person name="Craciun L."/>
            <person name="Bancroft C."/>
            <person name="Lufkin T."/>
        </authorList>
    </citation>
    <scope>NUCLEOTIDE SEQUENCE [MRNA]</scope>
    <scope>DEVELOPMENTAL STAGE</scope>
    <source>
        <strain>BALB/cJ</strain>
        <tissue>Brain</tissue>
    </source>
</reference>
<reference key="3">
    <citation type="journal article" date="2004" name="Genome Res.">
        <title>The status, quality, and expansion of the NIH full-length cDNA project: the Mammalian Gene Collection (MGC).</title>
        <authorList>
            <consortium name="The MGC Project Team"/>
        </authorList>
    </citation>
    <scope>NUCLEOTIDE SEQUENCE [LARGE SCALE MRNA]</scope>
    <source>
        <strain>FVB/N</strain>
        <tissue>Salivary gland</tissue>
    </source>
</reference>
<reference key="4">
    <citation type="journal article" date="2001" name="Traffic">
        <title>The mammalian guanine nucleotide exchange factor mSec12 is essential for activation of the Sar1 GTPase directing endoplasmic reticulum export.</title>
        <authorList>
            <person name="Weissman J.T."/>
            <person name="Plutner H."/>
            <person name="Balch W.E."/>
        </authorList>
    </citation>
    <scope>FUNCTION</scope>
    <scope>INTERACTION WITH SAR1B</scope>
</reference>
<reference key="5">
    <citation type="journal article" date="2006" name="Biochemistry">
        <title>Endogenously nitrated proteins in mouse brain: links to neurodegenerative disease.</title>
        <authorList>
            <person name="Sacksteder C.A."/>
            <person name="Qian W.-J."/>
            <person name="Knyushko T.V."/>
            <person name="Wang H."/>
            <person name="Chin M.H."/>
            <person name="Lacan G."/>
            <person name="Melega W.P."/>
            <person name="Camp D.G. II"/>
            <person name="Smith R.D."/>
            <person name="Smith D.J."/>
            <person name="Squier T.C."/>
            <person name="Bigelow D.J."/>
        </authorList>
    </citation>
    <scope>NITRATION [LARGE SCALE ANALYSIS] AT TYR-10</scope>
    <scope>IDENTIFICATION BY MASS SPECTROMETRY [LARGE SCALE ANALYSIS]</scope>
    <source>
        <tissue>Brain</tissue>
    </source>
</reference>
<reference key="6">
    <citation type="journal article" date="2010" name="Cell">
        <title>A tissue-specific atlas of mouse protein phosphorylation and expression.</title>
        <authorList>
            <person name="Huttlin E.L."/>
            <person name="Jedrychowski M.P."/>
            <person name="Elias J.E."/>
            <person name="Goswami T."/>
            <person name="Rad R."/>
            <person name="Beausoleil S.A."/>
            <person name="Villen J."/>
            <person name="Haas W."/>
            <person name="Sowa M.E."/>
            <person name="Gygi S.P."/>
        </authorList>
    </citation>
    <scope>IDENTIFICATION BY MASS SPECTROMETRY [LARGE SCALE ANALYSIS]</scope>
    <source>
        <tissue>Brown adipose tissue</tissue>
        <tissue>Heart</tissue>
        <tissue>Kidney</tissue>
        <tissue>Liver</tissue>
        <tissue>Lung</tissue>
        <tissue>Pancreas</tissue>
        <tissue>Spleen</tissue>
        <tissue>Testis</tissue>
    </source>
</reference>
<reference key="7">
    <citation type="journal article" date="2019" name="EMBO J.">
        <title>Cideb controls sterol-regulated ER export of SREBP/SCAP by promoting cargo loading at ER exit sites.</title>
        <authorList>
            <person name="Su L."/>
            <person name="Zhou L."/>
            <person name="Chen F.J."/>
            <person name="Wang H."/>
            <person name="Qian H."/>
            <person name="Sheng Y."/>
            <person name="Zhu Y."/>
            <person name="Yu H."/>
            <person name="Gong X."/>
            <person name="Cai L."/>
            <person name="Yang X."/>
            <person name="Xu L."/>
            <person name="Zhao T.J."/>
            <person name="Li J.Z."/>
            <person name="Chen X.W."/>
            <person name="Li P."/>
        </authorList>
    </citation>
    <scope>INTERACTION WITH CIDEB</scope>
</reference>
<keyword id="KW-0010">Activator</keyword>
<keyword id="KW-0238">DNA-binding</keyword>
<keyword id="KW-0256">Endoplasmic reticulum</keyword>
<keyword id="KW-0931">ER-Golgi transport</keyword>
<keyword id="KW-0472">Membrane</keyword>
<keyword id="KW-0944">Nitration</keyword>
<keyword id="KW-0539">Nucleus</keyword>
<keyword id="KW-0653">Protein transport</keyword>
<keyword id="KW-1185">Reference proteome</keyword>
<keyword id="KW-0677">Repeat</keyword>
<keyword id="KW-0804">Transcription</keyword>
<keyword id="KW-0805">Transcription regulation</keyword>
<keyword id="KW-0812">Transmembrane</keyword>
<keyword id="KW-1133">Transmembrane helix</keyword>
<keyword id="KW-0813">Transport</keyword>
<keyword id="KW-0853">WD repeat</keyword>
<name>SEC12_MOUSE</name>